<sequence length="85" mass="10190">MGRLYSGNLAAFKAATNKLFQLDLAVIYDDWYDAYTRKDCIRLRIEDRSGNLIDTSTFYHHDEDVLFNMCTDWLNHMYDQLKDWK</sequence>
<reference key="1">
    <citation type="journal article" date="1983" name="J. Mol. Biol.">
        <title>Complete nucleotide sequence of bacteriophage T7 DNA and the locations of T7 genetic elements.</title>
        <authorList>
            <person name="Dunn J.J."/>
            <person name="Studier F.W."/>
        </authorList>
    </citation>
    <scope>NUCLEOTIDE SEQUENCE [LARGE SCALE GENOMIC DNA]</scope>
</reference>
<reference key="2">
    <citation type="journal article" date="1981" name="J. Mol. Biol.">
        <title>Nucleotide sequence from the genetic left end of bacteriophage T7 DNA to the beginning of gene 4.</title>
        <authorList>
            <person name="Dunn J.J."/>
            <person name="Studier F.W."/>
        </authorList>
    </citation>
    <scope>NUCLEOTIDE SEQUENCE [GENOMIC DNA]</scope>
</reference>
<reference key="3">
    <citation type="journal article" date="1980" name="Proc. Natl. Acad. Sci. U.S.A.">
        <title>Nucleotide sequence of the primary origin of bacteriophage T7 DNA replication: relationship to adjacent genes and regulatory elements.</title>
        <authorList>
            <person name="Saito H."/>
            <person name="Tabor S."/>
            <person name="Tamanoi F."/>
            <person name="Richardson C.C."/>
        </authorList>
    </citation>
    <scope>NUCLEOTIDE SEQUENCE [GENOMIC DNA]</scope>
</reference>
<reference key="4">
    <citation type="journal article" date="1987" name="J. Biol. Chem.">
        <title>Gene 1.2 protein of bacteriophage T7. Effect on deoxyribonucleotide pools.</title>
        <authorList>
            <person name="Myers J.A."/>
            <person name="Beauchamp B.B."/>
            <person name="Richardson C.C."/>
        </authorList>
    </citation>
    <scope>FUNCTION</scope>
</reference>
<reference key="5">
    <citation type="journal article" date="1990" name="J. Biol. Chem.">
        <title>The gene 1.2 protein of bacteriophage T7 interacts with the Escherichia coli dGTP triphosphohydrolase to form a GTP-binding protein.</title>
        <authorList>
            <person name="Nakai H."/>
            <person name="Richardson C.C."/>
        </authorList>
    </citation>
    <scope>FUNCTION</scope>
    <scope>INTERACTION WITH HOST DGT</scope>
</reference>
<comment type="function">
    <text evidence="1 2">Plays a role in increasing the intracellular pool of dGTP. Interacts with and inhibits host dGTPase/dgt. The complex made of the host dGTPase and gene 1.2 protein creates a GTP-binding site of high affinity. Subsequent binding of GTP to the enzyme-inhibitor complex inhibits its dissociation.</text>
</comment>
<comment type="subunit">
    <text evidence="1">Interacts with host dGTPase/dgt.</text>
</comment>
<evidence type="ECO:0000269" key="1">
    <source>
    </source>
</evidence>
<evidence type="ECO:0000269" key="2">
    <source>
    </source>
</evidence>
<evidence type="ECO:0007829" key="3">
    <source>
        <dbReference type="PDB" id="2MDP"/>
    </source>
</evidence>
<evidence type="ECO:0007829" key="4">
    <source>
        <dbReference type="PDB" id="7U67"/>
    </source>
</evidence>
<feature type="chain" id="PRO_0000106470" description="Inhibitor of dGTPase">
    <location>
        <begin position="1"/>
        <end position="85"/>
    </location>
</feature>
<feature type="helix" evidence="4">
    <location>
        <begin position="6"/>
        <end position="20"/>
    </location>
</feature>
<feature type="strand" evidence="4">
    <location>
        <begin position="23"/>
        <end position="32"/>
    </location>
</feature>
<feature type="strand" evidence="4">
    <location>
        <begin position="34"/>
        <end position="36"/>
    </location>
</feature>
<feature type="strand" evidence="4">
    <location>
        <begin position="38"/>
        <end position="47"/>
    </location>
</feature>
<feature type="strand" evidence="3">
    <location>
        <begin position="48"/>
        <end position="50"/>
    </location>
</feature>
<feature type="strand" evidence="4">
    <location>
        <begin position="52"/>
        <end position="61"/>
    </location>
</feature>
<feature type="helix" evidence="4">
    <location>
        <begin position="63"/>
        <end position="83"/>
    </location>
</feature>
<organismHost>
    <name type="scientific">Escherichia coli</name>
    <dbReference type="NCBI Taxonomy" id="562"/>
</organismHost>
<accession>P03780</accession>
<gene>
    <name type="ordered locus">1.2</name>
</gene>
<proteinExistence type="evidence at protein level"/>
<dbReference type="EMBL" id="V01146">
    <property type="protein sequence ID" value="CAA24392.1"/>
    <property type="molecule type" value="Genomic_DNA"/>
</dbReference>
<dbReference type="EMBL" id="V01126">
    <property type="protein sequence ID" value="CAA24325.1"/>
    <property type="molecule type" value="Genomic_DNA"/>
</dbReference>
<dbReference type="EMBL" id="V01127">
    <property type="protein sequence ID" value="CAA24335.1"/>
    <property type="molecule type" value="Genomic_DNA"/>
</dbReference>
<dbReference type="PIR" id="F43002">
    <property type="entry name" value="W1BP27"/>
</dbReference>
<dbReference type="RefSeq" id="NP_041962.1">
    <property type="nucleotide sequence ID" value="NC_001604.1"/>
</dbReference>
<dbReference type="PDB" id="2MDP">
    <property type="method" value="NMR"/>
    <property type="chains" value="A=1-85"/>
</dbReference>
<dbReference type="PDB" id="7U65">
    <property type="method" value="EM"/>
    <property type="resolution" value="2.80 A"/>
    <property type="chains" value="G/H/I/J/K/L=1-85"/>
</dbReference>
<dbReference type="PDB" id="7U66">
    <property type="method" value="EM"/>
    <property type="resolution" value="3.10 A"/>
    <property type="chains" value="G/H/I/J/K/L=1-85"/>
</dbReference>
<dbReference type="PDB" id="7U67">
    <property type="method" value="EM"/>
    <property type="resolution" value="2.50 A"/>
    <property type="chains" value="G/H/I/J/K/L=1-85"/>
</dbReference>
<dbReference type="PDBsum" id="2MDP"/>
<dbReference type="PDBsum" id="7U65"/>
<dbReference type="PDBsum" id="7U66"/>
<dbReference type="PDBsum" id="7U67"/>
<dbReference type="BMRB" id="P03780"/>
<dbReference type="EMDB" id="EMD-26360"/>
<dbReference type="EMDB" id="EMD-26361"/>
<dbReference type="EMDB" id="EMD-26362"/>
<dbReference type="SMR" id="P03780"/>
<dbReference type="KEGG" id="vg:1261049"/>
<dbReference type="OrthoDB" id="17661at10239"/>
<dbReference type="Proteomes" id="UP000000840">
    <property type="component" value="Genome"/>
</dbReference>
<dbReference type="GO" id="GO:0006260">
    <property type="term" value="P:DNA replication"/>
    <property type="evidence" value="ECO:0007669"/>
    <property type="project" value="UniProtKB-KW"/>
</dbReference>
<dbReference type="InterPro" id="IPR020147">
    <property type="entry name" value="Phage_T7-like_1.2"/>
</dbReference>
<dbReference type="Pfam" id="PF10922">
    <property type="entry name" value="T7-like_gp12"/>
    <property type="match status" value="1"/>
</dbReference>
<organism>
    <name type="scientific">Escherichia phage T7</name>
    <name type="common">Bacteriophage T7</name>
    <dbReference type="NCBI Taxonomy" id="10760"/>
    <lineage>
        <taxon>Viruses</taxon>
        <taxon>Duplodnaviria</taxon>
        <taxon>Heunggongvirae</taxon>
        <taxon>Uroviricota</taxon>
        <taxon>Caudoviricetes</taxon>
        <taxon>Autographiviridae</taxon>
        <taxon>Studiervirinae</taxon>
        <taxon>Teseptimavirus</taxon>
        <taxon>Teseptimavirus T7</taxon>
    </lineage>
</organism>
<keyword id="KW-0002">3D-structure</keyword>
<keyword id="KW-0235">DNA replication</keyword>
<keyword id="KW-0244">Early protein</keyword>
<keyword id="KW-0945">Host-virus interaction</keyword>
<keyword id="KW-1185">Reference proteome</keyword>
<name>GP12_BPT7</name>
<protein>
    <recommendedName>
        <fullName>Inhibitor of dGTPase</fullName>
    </recommendedName>
    <alternativeName>
        <fullName>Gene product 1.2</fullName>
        <shortName>Gp1.2</shortName>
    </alternativeName>
    <alternativeName>
        <fullName>Inhibitor of dGTPase gp1.2</fullName>
    </alternativeName>
</protein>